<accession>A0JMA8</accession>
<proteinExistence type="evidence at transcript level"/>
<comment type="function">
    <text evidence="1 2 3">Involved in ciliogenesis. It is required for appropriate acetylation and polyglutamylation of ciliary microtubules, and regulation of cilium length (By similarity). Acts as a positive regulator of hedgehog (Hh)signaling (By similarity).</text>
</comment>
<comment type="subcellular location">
    <subcellularLocation>
        <location evidence="2">Cytoplasm</location>
        <location evidence="2">Cytoskeleton</location>
        <location evidence="2">Cilium basal body</location>
    </subcellularLocation>
    <subcellularLocation>
        <location evidence="3">Cell projection</location>
        <location evidence="3">Cilium</location>
    </subcellularLocation>
    <subcellularLocation>
        <location evidence="2">Cytoplasm</location>
        <location evidence="2">Cytoskeleton</location>
        <location evidence="2">Microtubule organizing center</location>
        <location evidence="2">Centrosome</location>
        <location evidence="2">Centriole</location>
    </subcellularLocation>
    <text evidence="2 3">Localized to the proximal region in cilia. Stimulation of Hh signaling leads to redistribution of ARMC9 toward the ciliary tip within 6 hours, follow by a gradual return to its original proximal location (By similarity). Localizes to the daughter centriole of the primary cilium in RPE1 cells (By similarity).</text>
</comment>
<gene>
    <name type="primary">armc9</name>
</gene>
<protein>
    <recommendedName>
        <fullName>LisH domain-containing protein ARMC9</fullName>
    </recommendedName>
</protein>
<dbReference type="EMBL" id="BC125807">
    <property type="protein sequence ID" value="AAI25808.1"/>
    <property type="molecule type" value="mRNA"/>
</dbReference>
<dbReference type="RefSeq" id="NP_001090642.1">
    <property type="nucleotide sequence ID" value="NM_001097173.1"/>
</dbReference>
<dbReference type="SMR" id="A0JMA8"/>
<dbReference type="FunCoup" id="A0JMA8">
    <property type="interactions" value="247"/>
</dbReference>
<dbReference type="STRING" id="8364.ENSXETP00000031400"/>
<dbReference type="PaxDb" id="8364-ENSXETP00000021038"/>
<dbReference type="GeneID" id="100036614"/>
<dbReference type="KEGG" id="xtr:100036614"/>
<dbReference type="AGR" id="Xenbase:XB-GENE-990021"/>
<dbReference type="CTD" id="80210"/>
<dbReference type="Xenbase" id="XB-GENE-990021">
    <property type="gene designation" value="armc9"/>
</dbReference>
<dbReference type="eggNOG" id="ENOG502QQ9W">
    <property type="taxonomic scope" value="Eukaryota"/>
</dbReference>
<dbReference type="HOGENOM" id="CLU_007962_1_0_1"/>
<dbReference type="InParanoid" id="A0JMA8"/>
<dbReference type="OMA" id="QQSDKEF"/>
<dbReference type="OrthoDB" id="538223at2759"/>
<dbReference type="TreeFam" id="TF317676"/>
<dbReference type="Proteomes" id="UP000008143">
    <property type="component" value="Chromosome 5"/>
</dbReference>
<dbReference type="GO" id="GO:0005814">
    <property type="term" value="C:centriole"/>
    <property type="evidence" value="ECO:0000250"/>
    <property type="project" value="UniProtKB"/>
</dbReference>
<dbReference type="GO" id="GO:0036064">
    <property type="term" value="C:ciliary basal body"/>
    <property type="evidence" value="ECO:0000250"/>
    <property type="project" value="UniProtKB"/>
</dbReference>
<dbReference type="GO" id="GO:0097542">
    <property type="term" value="C:ciliary tip"/>
    <property type="evidence" value="ECO:0000250"/>
    <property type="project" value="UniProtKB"/>
</dbReference>
<dbReference type="GO" id="GO:0005929">
    <property type="term" value="C:cilium"/>
    <property type="evidence" value="ECO:0000250"/>
    <property type="project" value="UniProtKB"/>
</dbReference>
<dbReference type="GO" id="GO:0005737">
    <property type="term" value="C:cytoplasm"/>
    <property type="evidence" value="ECO:0007669"/>
    <property type="project" value="UniProtKB-KW"/>
</dbReference>
<dbReference type="GO" id="GO:0060271">
    <property type="term" value="P:cilium assembly"/>
    <property type="evidence" value="ECO:0000250"/>
    <property type="project" value="UniProtKB"/>
</dbReference>
<dbReference type="GO" id="GO:0045880">
    <property type="term" value="P:positive regulation of smoothened signaling pathway"/>
    <property type="evidence" value="ECO:0000250"/>
    <property type="project" value="UniProtKB"/>
</dbReference>
<dbReference type="FunFam" id="1.25.10.10:FF:000124">
    <property type="entry name" value="lisH domain-containing protein ARMC9 isoform X1"/>
    <property type="match status" value="1"/>
</dbReference>
<dbReference type="Gene3D" id="1.25.10.10">
    <property type="entry name" value="Leucine-rich Repeat Variant"/>
    <property type="match status" value="1"/>
</dbReference>
<dbReference type="InterPro" id="IPR011989">
    <property type="entry name" value="ARM-like"/>
</dbReference>
<dbReference type="InterPro" id="IPR016024">
    <property type="entry name" value="ARM-type_fold"/>
</dbReference>
<dbReference type="InterPro" id="IPR040369">
    <property type="entry name" value="ARMC9"/>
</dbReference>
<dbReference type="InterPro" id="IPR048959">
    <property type="entry name" value="ARMC9_ARM_dom"/>
</dbReference>
<dbReference type="InterPro" id="IPR056327">
    <property type="entry name" value="ARMC9_CTLH-like_dom"/>
</dbReference>
<dbReference type="InterPro" id="IPR048957">
    <property type="entry name" value="ARMC9_LisH"/>
</dbReference>
<dbReference type="InterPro" id="IPR006594">
    <property type="entry name" value="LisH"/>
</dbReference>
<dbReference type="PANTHER" id="PTHR14881">
    <property type="entry name" value="LISH DOMAIN-CONTAINING PROTEIN ARMC9"/>
    <property type="match status" value="1"/>
</dbReference>
<dbReference type="PANTHER" id="PTHR14881:SF4">
    <property type="entry name" value="LISH DOMAIN-CONTAINING PROTEIN ARMC9"/>
    <property type="match status" value="1"/>
</dbReference>
<dbReference type="Pfam" id="PF21050">
    <property type="entry name" value="ARMC9_ARM"/>
    <property type="match status" value="1"/>
</dbReference>
<dbReference type="Pfam" id="PF21051">
    <property type="entry name" value="ARMC9_LisH"/>
    <property type="match status" value="1"/>
</dbReference>
<dbReference type="Pfam" id="PF23138">
    <property type="entry name" value="CTLH_Armc9"/>
    <property type="match status" value="1"/>
</dbReference>
<dbReference type="SUPFAM" id="SSF48371">
    <property type="entry name" value="ARM repeat"/>
    <property type="match status" value="1"/>
</dbReference>
<dbReference type="PROSITE" id="PS50896">
    <property type="entry name" value="LISH"/>
    <property type="match status" value="1"/>
</dbReference>
<name>ARMC9_XENTR</name>
<keyword id="KW-0966">Cell projection</keyword>
<keyword id="KW-0970">Cilium biogenesis/degradation</keyword>
<keyword id="KW-0175">Coiled coil</keyword>
<keyword id="KW-0963">Cytoplasm</keyword>
<keyword id="KW-0206">Cytoskeleton</keyword>
<keyword id="KW-1185">Reference proteome</keyword>
<organism>
    <name type="scientific">Xenopus tropicalis</name>
    <name type="common">Western clawed frog</name>
    <name type="synonym">Silurana tropicalis</name>
    <dbReference type="NCBI Taxonomy" id="8364"/>
    <lineage>
        <taxon>Eukaryota</taxon>
        <taxon>Metazoa</taxon>
        <taxon>Chordata</taxon>
        <taxon>Craniata</taxon>
        <taxon>Vertebrata</taxon>
        <taxon>Euteleostomi</taxon>
        <taxon>Amphibia</taxon>
        <taxon>Batrachia</taxon>
        <taxon>Anura</taxon>
        <taxon>Pipoidea</taxon>
        <taxon>Pipidae</taxon>
        <taxon>Xenopodinae</taxon>
        <taxon>Xenopus</taxon>
        <taxon>Silurana</taxon>
    </lineage>
</organism>
<feature type="chain" id="PRO_0000280600" description="LisH domain-containing protein ARMC9">
    <location>
        <begin position="1"/>
        <end position="808"/>
    </location>
</feature>
<feature type="domain" description="LisH" evidence="5">
    <location>
        <begin position="7"/>
        <end position="39"/>
    </location>
</feature>
<feature type="region of interest" description="Disordered" evidence="6">
    <location>
        <begin position="576"/>
        <end position="599"/>
    </location>
</feature>
<feature type="region of interest" description="Disordered" evidence="6">
    <location>
        <begin position="650"/>
        <end position="709"/>
    </location>
</feature>
<feature type="region of interest" description="Disordered" evidence="6">
    <location>
        <begin position="742"/>
        <end position="808"/>
    </location>
</feature>
<feature type="coiled-coil region" evidence="4">
    <location>
        <begin position="196"/>
        <end position="230"/>
    </location>
</feature>
<feature type="compositionally biased region" description="Acidic residues" evidence="6">
    <location>
        <begin position="579"/>
        <end position="599"/>
    </location>
</feature>
<feature type="compositionally biased region" description="Polar residues" evidence="6">
    <location>
        <begin position="655"/>
        <end position="668"/>
    </location>
</feature>
<feature type="compositionally biased region" description="Polar residues" evidence="6">
    <location>
        <begin position="677"/>
        <end position="709"/>
    </location>
</feature>
<feature type="compositionally biased region" description="Polar residues" evidence="6">
    <location>
        <begin position="775"/>
        <end position="784"/>
    </location>
</feature>
<feature type="compositionally biased region" description="Low complexity" evidence="6">
    <location>
        <begin position="785"/>
        <end position="808"/>
    </location>
</feature>
<evidence type="ECO:0000250" key="1">
    <source>
        <dbReference type="UniProtKB" id="E7F187"/>
    </source>
</evidence>
<evidence type="ECO:0000250" key="2">
    <source>
        <dbReference type="UniProtKB" id="Q7Z3E5"/>
    </source>
</evidence>
<evidence type="ECO:0000250" key="3">
    <source>
        <dbReference type="UniProtKB" id="Q9D2I5"/>
    </source>
</evidence>
<evidence type="ECO:0000255" key="4"/>
<evidence type="ECO:0000255" key="5">
    <source>
        <dbReference type="PROSITE-ProRule" id="PRU00126"/>
    </source>
</evidence>
<evidence type="ECO:0000256" key="6">
    <source>
        <dbReference type="SAM" id="MobiDB-lite"/>
    </source>
</evidence>
<sequence length="808" mass="91819">MGDILAYEADLLGLVKEFLNFGEFQETLETFTKECKTKGKQLPKTSGLALRESKTLLIQKDLITAFEDGDIKEFFALWQEHIPVETQNTNPVAQKLEFYLQIHFAIFPLKHNQGRIDRTDCEERISHFKTYLETSGAALSQTTEFLPFYALPFVPHPAAHPSFKEIFQESWEAELRMRLEKFLSVILKATSTPRLITLYKESLHNNQELLQQLQQQLMETEHKARTYKKCFNRMQSDYHNLIGVTADLVDSLEATINGKLITPEYLQSVCTRLFSTQMKQSSAQSIDFTRPGTASSMLRASIAPLKQQEVPLFPSLDYEKLKKDLVFGNDRLKALILQALRWRLTRSQPGEQRNTVLQAYISNDLLDCHHNEQKNVLMLLRSPSEVVRQYTALLIDVFSSLAYGRVYISQNPRLLHSLVETWKAEEKESVIRETVLGILQKLSLRRSMQSAMIKDDLIFWLVQELEDTDHLSDYALQYTIALFMNLCLRSAGRKMCSRDADHVLKVLSDLLGHENHEIRSYVNGALYSILAVPSIREEARSMGMEEILRWYIREGNTDMNCHIEFIIKQLNSEDKFDESIESDDEEEEKDDEEDEDALEADLDKDEIIYAQSGELAGEKLLTTDYLGIMTNSFKVKKRMFGGVLQSADEPLQRPVTPSTHRVMNTVRKTSGPPSPPTNTFKTSQANMSVVSSRPPTRSGSRASTSDYCVTSDSIDSEASRLFSPSSQADQRGASSPRILDLGMEKHNGQNSSKAWLPRSPEVLSATSRKARTPTIAPQFSQSGPQQTSYSSSAGSSTRSRQSTQSYRK</sequence>
<reference key="1">
    <citation type="submission" date="2006-10" db="EMBL/GenBank/DDBJ databases">
        <authorList>
            <consortium name="NIH - Xenopus Gene Collection (XGC) project"/>
        </authorList>
    </citation>
    <scope>NUCLEOTIDE SEQUENCE [LARGE SCALE MRNA]</scope>
    <source>
        <strain>N6</strain>
        <tissue>Oviduct</tissue>
    </source>
</reference>